<proteinExistence type="inferred from homology"/>
<sequence length="100" mass="11923">MLKNRYLKYLFILILLSILSIMPIFAIIYRIFSRNYLYAFIIVCLFFQILAHIKFFLNLDFSLEQRWKLISVIFSLVVGLIILLGSIWVIKNLNNNLCIM</sequence>
<comment type="function">
    <text evidence="1">Cytochrome bo(3) ubiquinol terminal oxidase is the component of the aerobic respiratory chain of E.coli that predominates when cells are grown at high aeration. Has proton pump activity across the membrane in addition to electron transfer, pumping 2 protons/electron (By similarity).</text>
</comment>
<comment type="subunit">
    <text evidence="1">Heterooctamer of two A chains, two B chains, two C chains and two D chains.</text>
</comment>
<comment type="subcellular location">
    <subcellularLocation>
        <location evidence="1">Cell membrane</location>
        <topology evidence="1">Multi-pass membrane protein</topology>
    </subcellularLocation>
</comment>
<comment type="similarity">
    <text evidence="3">Belongs to the cytochrome c oxidase bacterial subunit 4 family.</text>
</comment>
<feature type="chain" id="PRO_0000183915" description="Cytochrome bo(3) ubiquinol oxidase subunit 4">
    <location>
        <begin position="1"/>
        <end position="100"/>
    </location>
</feature>
<feature type="topological domain" description="Cytoplasmic" evidence="2">
    <location>
        <begin position="1"/>
        <end position="9"/>
    </location>
</feature>
<feature type="transmembrane region" description="Helical" evidence="2">
    <location>
        <begin position="10"/>
        <end position="32"/>
    </location>
</feature>
<feature type="topological domain" description="Extracellular" evidence="2">
    <location>
        <begin position="33"/>
        <end position="36"/>
    </location>
</feature>
<feature type="transmembrane region" description="Helical" evidence="2">
    <location>
        <begin position="37"/>
        <end position="59"/>
    </location>
</feature>
<feature type="topological domain" description="Cytoplasmic" evidence="2">
    <location>
        <begin position="60"/>
        <end position="68"/>
    </location>
</feature>
<feature type="transmembrane region" description="Helical" evidence="2">
    <location>
        <begin position="69"/>
        <end position="90"/>
    </location>
</feature>
<feature type="topological domain" description="Extracellular" evidence="2">
    <location>
        <begin position="91"/>
        <end position="100"/>
    </location>
</feature>
<dbReference type="EMBL" id="AE016826">
    <property type="protein sequence ID" value="AAO27124.1"/>
    <property type="molecule type" value="Genomic_DNA"/>
</dbReference>
<dbReference type="RefSeq" id="WP_011091525.1">
    <property type="nucleotide sequence ID" value="NC_004545.1"/>
</dbReference>
<dbReference type="SMR" id="Q89AA6"/>
<dbReference type="STRING" id="224915.bbp_414"/>
<dbReference type="KEGG" id="bab:bbp_414"/>
<dbReference type="eggNOG" id="COG3125">
    <property type="taxonomic scope" value="Bacteria"/>
</dbReference>
<dbReference type="HOGENOM" id="CLU_140945_1_1_6"/>
<dbReference type="OrthoDB" id="2375888at2"/>
<dbReference type="Proteomes" id="UP000000601">
    <property type="component" value="Chromosome"/>
</dbReference>
<dbReference type="GO" id="GO:0009319">
    <property type="term" value="C:cytochrome o ubiquinol oxidase complex"/>
    <property type="evidence" value="ECO:0007669"/>
    <property type="project" value="TreeGrafter"/>
</dbReference>
<dbReference type="GO" id="GO:0005886">
    <property type="term" value="C:plasma membrane"/>
    <property type="evidence" value="ECO:0007669"/>
    <property type="project" value="UniProtKB-SubCell"/>
</dbReference>
<dbReference type="GO" id="GO:0009486">
    <property type="term" value="F:cytochrome bo3 ubiquinol oxidase activity"/>
    <property type="evidence" value="ECO:0007669"/>
    <property type="project" value="TreeGrafter"/>
</dbReference>
<dbReference type="GO" id="GO:0015078">
    <property type="term" value="F:proton transmembrane transporter activity"/>
    <property type="evidence" value="ECO:0007669"/>
    <property type="project" value="TreeGrafter"/>
</dbReference>
<dbReference type="GO" id="GO:0019646">
    <property type="term" value="P:aerobic electron transport chain"/>
    <property type="evidence" value="ECO:0007669"/>
    <property type="project" value="TreeGrafter"/>
</dbReference>
<dbReference type="GO" id="GO:0015990">
    <property type="term" value="P:electron transport coupled proton transport"/>
    <property type="evidence" value="ECO:0007669"/>
    <property type="project" value="TreeGrafter"/>
</dbReference>
<dbReference type="InterPro" id="IPR005171">
    <property type="entry name" value="Cyt_c_oxidase_su4_prok"/>
</dbReference>
<dbReference type="InterPro" id="IPR050968">
    <property type="entry name" value="Cytochrome_c_oxidase_bac_sub4"/>
</dbReference>
<dbReference type="PANTHER" id="PTHR36835">
    <property type="entry name" value="CYTOCHROME BO(3) UBIQUINOL OXIDASE SUBUNIT 4"/>
    <property type="match status" value="1"/>
</dbReference>
<dbReference type="PANTHER" id="PTHR36835:SF1">
    <property type="entry name" value="CYTOCHROME BO(3) UBIQUINOL OXIDASE SUBUNIT 4"/>
    <property type="match status" value="1"/>
</dbReference>
<dbReference type="Pfam" id="PF03626">
    <property type="entry name" value="COX4_pro"/>
    <property type="match status" value="1"/>
</dbReference>
<name>CYOD_BUCBP</name>
<reference key="1">
    <citation type="journal article" date="2003" name="Proc. Natl. Acad. Sci. U.S.A.">
        <title>Reductive genome evolution in Buchnera aphidicola.</title>
        <authorList>
            <person name="van Ham R.C.H.J."/>
            <person name="Kamerbeek J."/>
            <person name="Palacios C."/>
            <person name="Rausell C."/>
            <person name="Abascal F."/>
            <person name="Bastolla U."/>
            <person name="Fernandez J.M."/>
            <person name="Jimenez L."/>
            <person name="Postigo M."/>
            <person name="Silva F.J."/>
            <person name="Tamames J."/>
            <person name="Viguera E."/>
            <person name="Latorre A."/>
            <person name="Valencia A."/>
            <person name="Moran F."/>
            <person name="Moya A."/>
        </authorList>
    </citation>
    <scope>NUCLEOTIDE SEQUENCE [LARGE SCALE GENOMIC DNA]</scope>
    <source>
        <strain>Bp</strain>
    </source>
</reference>
<organism>
    <name type="scientific">Buchnera aphidicola subsp. Baizongia pistaciae (strain Bp)</name>
    <dbReference type="NCBI Taxonomy" id="224915"/>
    <lineage>
        <taxon>Bacteria</taxon>
        <taxon>Pseudomonadati</taxon>
        <taxon>Pseudomonadota</taxon>
        <taxon>Gammaproteobacteria</taxon>
        <taxon>Enterobacterales</taxon>
        <taxon>Erwiniaceae</taxon>
        <taxon>Buchnera</taxon>
    </lineage>
</organism>
<accession>Q89AA6</accession>
<protein>
    <recommendedName>
        <fullName>Cytochrome bo(3) ubiquinol oxidase subunit 4</fullName>
    </recommendedName>
    <alternativeName>
        <fullName>Cytochrome o ubiquinol oxidase subunit 4</fullName>
        <shortName>Cytochrome o subunit 4</shortName>
    </alternativeName>
    <alternativeName>
        <fullName>Oxidase bo(3) subunit 4</fullName>
    </alternativeName>
    <alternativeName>
        <fullName>Ubiquinol oxidase polypeptide IV</fullName>
    </alternativeName>
    <alternativeName>
        <fullName>Ubiquinol oxidase subunit 4</fullName>
    </alternativeName>
</protein>
<gene>
    <name type="primary">cyoD</name>
    <name type="ordered locus">bbp_414</name>
</gene>
<keyword id="KW-1003">Cell membrane</keyword>
<keyword id="KW-0249">Electron transport</keyword>
<keyword id="KW-0472">Membrane</keyword>
<keyword id="KW-0560">Oxidoreductase</keyword>
<keyword id="KW-1185">Reference proteome</keyword>
<keyword id="KW-0812">Transmembrane</keyword>
<keyword id="KW-1133">Transmembrane helix</keyword>
<keyword id="KW-0813">Transport</keyword>
<evidence type="ECO:0000250" key="1"/>
<evidence type="ECO:0000255" key="2"/>
<evidence type="ECO:0000305" key="3"/>